<accession>B3P5J1</accession>
<sequence>MEPISHLVKSSLPNYLSSLPIPDSIGGWFKLSFKDWLALIPPTVVVAGLGYTAYLAYCPAAQGSCSAKKSGRCNNLIRKNEPKVVDMIDVEDIAEKAAFCRCWKTKNWPYCDGSHGEHNKQTGDNVGPIVIKK</sequence>
<reference key="1">
    <citation type="journal article" date="2007" name="Nature">
        <title>Evolution of genes and genomes on the Drosophila phylogeny.</title>
        <authorList>
            <consortium name="Drosophila 12 genomes consortium"/>
        </authorList>
    </citation>
    <scope>NUCLEOTIDE SEQUENCE [LARGE SCALE GENOMIC DNA]</scope>
    <source>
        <strain>Tucson 14021-0224.01</strain>
    </source>
</reference>
<gene>
    <name evidence="2" type="primary">Cisd2</name>
    <name type="ORF">GG12028</name>
</gene>
<organism>
    <name type="scientific">Drosophila erecta</name>
    <name type="common">Fruit fly</name>
    <dbReference type="NCBI Taxonomy" id="7220"/>
    <lineage>
        <taxon>Eukaryota</taxon>
        <taxon>Metazoa</taxon>
        <taxon>Ecdysozoa</taxon>
        <taxon>Arthropoda</taxon>
        <taxon>Hexapoda</taxon>
        <taxon>Insecta</taxon>
        <taxon>Pterygota</taxon>
        <taxon>Neoptera</taxon>
        <taxon>Endopterygota</taxon>
        <taxon>Diptera</taxon>
        <taxon>Brachycera</taxon>
        <taxon>Muscomorpha</taxon>
        <taxon>Ephydroidea</taxon>
        <taxon>Drosophilidae</taxon>
        <taxon>Drosophila</taxon>
        <taxon>Sophophora</taxon>
    </lineage>
</organism>
<keyword id="KW-0001">2Fe-2S</keyword>
<keyword id="KW-0256">Endoplasmic reticulum</keyword>
<keyword id="KW-0408">Iron</keyword>
<keyword id="KW-0411">Iron-sulfur</keyword>
<keyword id="KW-0472">Membrane</keyword>
<keyword id="KW-0479">Metal-binding</keyword>
<keyword id="KW-0812">Transmembrane</keyword>
<keyword id="KW-1133">Transmembrane helix</keyword>
<comment type="cofactor">
    <cofactor evidence="1">
        <name>[2Fe-2S] cluster</name>
        <dbReference type="ChEBI" id="CHEBI:190135"/>
    </cofactor>
    <text evidence="1">Binds 1 [2Fe-2S] cluster.</text>
</comment>
<comment type="subcellular location">
    <subcellularLocation>
        <location evidence="4">Endoplasmic reticulum membrane</location>
        <topology evidence="4">Single-pass membrane protein</topology>
    </subcellularLocation>
</comment>
<comment type="similarity">
    <text evidence="4">Belongs to the CISD protein family. CISD2 subfamily.</text>
</comment>
<protein>
    <recommendedName>
        <fullName>CDGSH iron-sulfur domain-containing protein 2 homolog</fullName>
    </recommendedName>
</protein>
<proteinExistence type="inferred from homology"/>
<feature type="chain" id="PRO_0000392024" description="CDGSH iron-sulfur domain-containing protein 2 homolog">
    <location>
        <begin position="1"/>
        <end position="133"/>
    </location>
</feature>
<feature type="topological domain" description="Lumenal" evidence="3">
    <location>
        <begin position="1"/>
        <end position="35"/>
    </location>
</feature>
<feature type="transmembrane region" description="Helical" evidence="3">
    <location>
        <begin position="36"/>
        <end position="58"/>
    </location>
</feature>
<feature type="topological domain" description="Cytoplasmic" evidence="3">
    <location>
        <begin position="59"/>
        <end position="133"/>
    </location>
</feature>
<feature type="binding site" evidence="1">
    <location>
        <position position="100"/>
    </location>
    <ligand>
        <name>[2Fe-2S] cluster</name>
        <dbReference type="ChEBI" id="CHEBI:190135"/>
    </ligand>
</feature>
<feature type="binding site" evidence="1">
    <location>
        <position position="102"/>
    </location>
    <ligand>
        <name>[2Fe-2S] cluster</name>
        <dbReference type="ChEBI" id="CHEBI:190135"/>
    </ligand>
</feature>
<feature type="binding site" evidence="1">
    <location>
        <position position="111"/>
    </location>
    <ligand>
        <name>[2Fe-2S] cluster</name>
        <dbReference type="ChEBI" id="CHEBI:190135"/>
    </ligand>
</feature>
<feature type="binding site" evidence="1">
    <location>
        <position position="115"/>
    </location>
    <ligand>
        <name>[2Fe-2S] cluster</name>
        <dbReference type="ChEBI" id="CHEBI:190135"/>
    </ligand>
</feature>
<name>CISD2_DROER</name>
<evidence type="ECO:0000250" key="1"/>
<evidence type="ECO:0000250" key="2">
    <source>
        <dbReference type="UniProtKB" id="Q9VAM6"/>
    </source>
</evidence>
<evidence type="ECO:0000255" key="3"/>
<evidence type="ECO:0000305" key="4"/>
<dbReference type="EMBL" id="CH954182">
    <property type="protein sequence ID" value="EDV53241.1"/>
    <property type="molecule type" value="Genomic_DNA"/>
</dbReference>
<dbReference type="SMR" id="B3P5J1"/>
<dbReference type="EnsemblMetazoa" id="FBtr0132082">
    <property type="protein sequence ID" value="FBpp0130574"/>
    <property type="gene ID" value="FBgn0104320"/>
</dbReference>
<dbReference type="EnsemblMetazoa" id="XM_001981335.3">
    <property type="protein sequence ID" value="XP_001981371.1"/>
    <property type="gene ID" value="LOC6554950"/>
</dbReference>
<dbReference type="GeneID" id="6554950"/>
<dbReference type="KEGG" id="der:6554950"/>
<dbReference type="CTD" id="493856"/>
<dbReference type="eggNOG" id="KOG3461">
    <property type="taxonomic scope" value="Eukaryota"/>
</dbReference>
<dbReference type="HOGENOM" id="CLU_132293_1_0_1"/>
<dbReference type="OMA" id="QIRKHEP"/>
<dbReference type="OrthoDB" id="449252at2759"/>
<dbReference type="PhylomeDB" id="B3P5J1"/>
<dbReference type="Proteomes" id="UP000008711">
    <property type="component" value="Unassembled WGS sequence"/>
</dbReference>
<dbReference type="GO" id="GO:0005789">
    <property type="term" value="C:endoplasmic reticulum membrane"/>
    <property type="evidence" value="ECO:0007669"/>
    <property type="project" value="UniProtKB-SubCell"/>
</dbReference>
<dbReference type="GO" id="GO:0005741">
    <property type="term" value="C:mitochondrial outer membrane"/>
    <property type="evidence" value="ECO:0007669"/>
    <property type="project" value="EnsemblMetazoa"/>
</dbReference>
<dbReference type="GO" id="GO:0051537">
    <property type="term" value="F:2 iron, 2 sulfur cluster binding"/>
    <property type="evidence" value="ECO:0007669"/>
    <property type="project" value="UniProtKB-KW"/>
</dbReference>
<dbReference type="GO" id="GO:0046872">
    <property type="term" value="F:metal ion binding"/>
    <property type="evidence" value="ECO:0007669"/>
    <property type="project" value="UniProtKB-KW"/>
</dbReference>
<dbReference type="GO" id="GO:0006879">
    <property type="term" value="P:intracellular iron ion homeostasis"/>
    <property type="evidence" value="ECO:0007669"/>
    <property type="project" value="EnsemblMetazoa"/>
</dbReference>
<dbReference type="GO" id="GO:0006839">
    <property type="term" value="P:mitochondrial transport"/>
    <property type="evidence" value="ECO:0007669"/>
    <property type="project" value="EnsemblMetazoa"/>
</dbReference>
<dbReference type="GO" id="GO:0010506">
    <property type="term" value="P:regulation of autophagy"/>
    <property type="evidence" value="ECO:0007669"/>
    <property type="project" value="InterPro"/>
</dbReference>
<dbReference type="Gene3D" id="3.40.5.90">
    <property type="entry name" value="CDGSH iron-sulfur domain, mitoNEET-type"/>
    <property type="match status" value="1"/>
</dbReference>
<dbReference type="InterPro" id="IPR045131">
    <property type="entry name" value="CISD1/2"/>
</dbReference>
<dbReference type="InterPro" id="IPR018967">
    <property type="entry name" value="FeS-contain_CDGSH-typ"/>
</dbReference>
<dbReference type="InterPro" id="IPR019610">
    <property type="entry name" value="FeS-contain_mitoNEET_N"/>
</dbReference>
<dbReference type="InterPro" id="IPR042216">
    <property type="entry name" value="MitoNEET_CISD"/>
</dbReference>
<dbReference type="PANTHER" id="PTHR13680">
    <property type="entry name" value="CDGSH IRON-SULFUR DOMAIN-CONTAINING PROTEIN 1"/>
    <property type="match status" value="1"/>
</dbReference>
<dbReference type="PANTHER" id="PTHR13680:SF5">
    <property type="entry name" value="CDGSH IRON-SULFUR DOMAIN-CONTAINING PROTEIN 1"/>
    <property type="match status" value="1"/>
</dbReference>
<dbReference type="Pfam" id="PF10660">
    <property type="entry name" value="MitoNEET_N"/>
    <property type="match status" value="1"/>
</dbReference>
<dbReference type="Pfam" id="PF09360">
    <property type="entry name" value="zf-CDGSH"/>
    <property type="match status" value="1"/>
</dbReference>
<dbReference type="SMART" id="SM00704">
    <property type="entry name" value="ZnF_CDGSH"/>
    <property type="match status" value="1"/>
</dbReference>